<keyword id="KW-0238">DNA-binding</keyword>
<keyword id="KW-1185">Reference proteome</keyword>
<keyword id="KW-0946">Virion</keyword>
<organismHost>
    <name type="scientific">Homo sapiens</name>
    <name type="common">Human</name>
    <dbReference type="NCBI Taxonomy" id="9606"/>
</organismHost>
<gene>
    <name type="primary">OPG082</name>
    <name type="ORF">I6L</name>
</gene>
<accession>P68463</accession>
<accession>P12925</accession>
<name>PG082_VACCC</name>
<comment type="function">
    <text evidence="1">Binds to the hairpin form of the viral telomeric sequence. Might direct genome encapsidation into the virus particle.</text>
</comment>
<comment type="subcellular location">
    <subcellularLocation>
        <location evidence="1">Virion</location>
    </subcellularLocation>
    <text evidence="1">Present in the virus core.</text>
</comment>
<comment type="induction">
    <text evidence="1">Expressed in the intermediate phase of the viral replicative cycle.</text>
</comment>
<comment type="similarity">
    <text evidence="2">Belongs to the orthopoxvirus OPG082 family.</text>
</comment>
<proteinExistence type="inferred from homology"/>
<protein>
    <recommendedName>
        <fullName>Telomere-binding protein OPG082</fullName>
    </recommendedName>
    <alternativeName>
        <fullName>Telomere-binding protein I6</fullName>
    </alternativeName>
</protein>
<sequence>MNNFVKQVASKSLKPTKKLSPSDEVISLNECIISFNLDNFYYCNDGLFTKPINTPEDVLKSLLIMESFAYEKMIIKGLIKILISRAYINDIYFTPFGWLTGVDDDPETHVVIKIIFNSSLISIKSQVIEYLKPYNVNNLSVLTTEKELSINTFNVPDSIPMSIISFFPFDTDFILVILFFGVYNDSYCGISYISPKERLPYIIEILKPLVSEINMLSDEIGRTSSIRIFNSTSVKKFPTNTLTSICEIVYSFDESSFPTPKTFTPLNASPYIPKKIVSLLDLPSNVEIKAISRGGVDFITHINNKRLNTILVIAKDNFLKNSTFSGTFIKENIIWKGIYTYRIIKSSFPVPTIKSVTNKKKICKKHCFVNSQYTTRTLSHIL</sequence>
<dbReference type="EMBL" id="M35027">
    <property type="protein sequence ID" value="AAA48062.1"/>
    <property type="molecule type" value="Genomic_DNA"/>
</dbReference>
<dbReference type="PIR" id="F29889">
    <property type="entry name" value="WZVZI6"/>
</dbReference>
<dbReference type="Proteomes" id="UP000008269">
    <property type="component" value="Segment"/>
</dbReference>
<dbReference type="GO" id="GO:0044423">
    <property type="term" value="C:virion component"/>
    <property type="evidence" value="ECO:0007669"/>
    <property type="project" value="UniProtKB-KW"/>
</dbReference>
<dbReference type="GO" id="GO:0003677">
    <property type="term" value="F:DNA binding"/>
    <property type="evidence" value="ECO:0007669"/>
    <property type="project" value="UniProtKB-KW"/>
</dbReference>
<dbReference type="GO" id="GO:0016032">
    <property type="term" value="P:viral process"/>
    <property type="evidence" value="ECO:0007669"/>
    <property type="project" value="InterPro"/>
</dbReference>
<dbReference type="InterPro" id="IPR007674">
    <property type="entry name" value="Poxvirus_F5/I6_dom"/>
</dbReference>
<dbReference type="InterPro" id="IPR022219">
    <property type="entry name" value="Poxvirus_I6_C"/>
</dbReference>
<dbReference type="Pfam" id="PF04595">
    <property type="entry name" value="Pox_I6"/>
    <property type="match status" value="1"/>
</dbReference>
<dbReference type="Pfam" id="PF12562">
    <property type="entry name" value="Pox_I6_C"/>
    <property type="match status" value="1"/>
</dbReference>
<organism>
    <name type="scientific">Vaccinia virus (strain Copenhagen)</name>
    <name type="common">VACV</name>
    <dbReference type="NCBI Taxonomy" id="10249"/>
    <lineage>
        <taxon>Viruses</taxon>
        <taxon>Varidnaviria</taxon>
        <taxon>Bamfordvirae</taxon>
        <taxon>Nucleocytoviricota</taxon>
        <taxon>Pokkesviricetes</taxon>
        <taxon>Chitovirales</taxon>
        <taxon>Poxviridae</taxon>
        <taxon>Chordopoxvirinae</taxon>
        <taxon>Orthopoxvirus</taxon>
        <taxon>Vaccinia virus</taxon>
    </lineage>
</organism>
<evidence type="ECO:0000250" key="1">
    <source>
        <dbReference type="UniProtKB" id="P68462"/>
    </source>
</evidence>
<evidence type="ECO:0000305" key="2"/>
<reference key="1">
    <citation type="journal article" date="1990" name="Virology">
        <title>The complete DNA sequence of vaccinia virus.</title>
        <authorList>
            <person name="Goebel S.J."/>
            <person name="Johnson G.P."/>
            <person name="Perkus M.E."/>
            <person name="Davis S.W."/>
            <person name="Winslow J.P."/>
            <person name="Paoletti E."/>
        </authorList>
    </citation>
    <scope>NUCLEOTIDE SEQUENCE [LARGE SCALE GENOMIC DNA]</scope>
</reference>
<reference key="2">
    <citation type="journal article" date="1990" name="Virology">
        <title>Appendix to 'The complete DNA sequence of vaccinia virus'.</title>
        <authorList>
            <person name="Goebel S.J."/>
            <person name="Johnson G.P."/>
            <person name="Perkus M.E."/>
            <person name="Davis S.W."/>
            <person name="Winslow J.P."/>
            <person name="Paoletti E."/>
        </authorList>
    </citation>
    <scope>NUCLEOTIDE SEQUENCE [LARGE SCALE GENOMIC DNA]</scope>
</reference>
<feature type="chain" id="PRO_0000099578" description="Telomere-binding protein OPG082">
    <location>
        <begin position="1"/>
        <end position="382"/>
    </location>
</feature>